<keyword id="KW-0349">Heme</keyword>
<keyword id="KW-0408">Iron</keyword>
<keyword id="KW-0479">Metal-binding</keyword>
<keyword id="KW-0561">Oxygen transport</keyword>
<keyword id="KW-0813">Transport</keyword>
<reference key="1">
    <citation type="journal article" date="1998" name="Proc. Natl. Acad. Sci. U.S.A.">
        <title>Antarctic fish hemoglobins: evidence for adaptive evolution at subzero temperature.</title>
        <authorList>
            <person name="Bargelloni L."/>
            <person name="Marcato S."/>
            <person name="Patarnello T."/>
        </authorList>
    </citation>
    <scope>NUCLEOTIDE SEQUENCE [MRNA]</scope>
</reference>
<proteinExistence type="evidence at transcript level"/>
<feature type="initiator methionine" description="Removed">
    <location>
        <position position="1"/>
    </location>
</feature>
<feature type="chain" id="PRO_0000053136" description="Hemoglobin subunit beta">
    <location>
        <begin position="2"/>
        <end position="147"/>
    </location>
</feature>
<feature type="domain" description="Globin" evidence="1">
    <location>
        <begin position="3"/>
        <end position="147"/>
    </location>
</feature>
<feature type="binding site" description="distal binding residue">
    <location>
        <position position="64"/>
    </location>
    <ligand>
        <name>heme b</name>
        <dbReference type="ChEBI" id="CHEBI:60344"/>
    </ligand>
    <ligandPart>
        <name>Fe</name>
        <dbReference type="ChEBI" id="CHEBI:18248"/>
    </ligandPart>
</feature>
<feature type="binding site" description="proximal binding residue">
    <location>
        <position position="93"/>
    </location>
    <ligand>
        <name>heme b</name>
        <dbReference type="ChEBI" id="CHEBI:60344"/>
    </ligand>
    <ligandPart>
        <name>Fe</name>
        <dbReference type="ChEBI" id="CHEBI:18248"/>
    </ligandPart>
</feature>
<name>HBB2_TRENE</name>
<accession>O93349</accession>
<comment type="function">
    <text>Involved in oxygen transport from gills to the various peripheral tissues.</text>
</comment>
<comment type="subunit">
    <text>Heterotetramer of two alpha chains and two beta chains.</text>
</comment>
<comment type="tissue specificity">
    <text>Red blood cells.</text>
</comment>
<comment type="similarity">
    <text evidence="1">Belongs to the globin family.</text>
</comment>
<sequence length="147" mass="16326">MVEWTDKERTIISDIFSHMDYDDIGPKALSRCLIVYPWTQRHFSGFGNLYNAEAIIGNANVAAHGIKVLHGLDRGMKNMDNIADAYTDLSTLHSEKLHVDPDNFKLLSDCITIVLAAKMGHAFTAETQGAFQKFLAAVVSALGKQYH</sequence>
<organism>
    <name type="scientific">Trematomus newnesi</name>
    <name type="common">Dusky notothen</name>
    <dbReference type="NCBI Taxonomy" id="35730"/>
    <lineage>
        <taxon>Eukaryota</taxon>
        <taxon>Metazoa</taxon>
        <taxon>Chordata</taxon>
        <taxon>Craniata</taxon>
        <taxon>Vertebrata</taxon>
        <taxon>Euteleostomi</taxon>
        <taxon>Actinopterygii</taxon>
        <taxon>Neopterygii</taxon>
        <taxon>Teleostei</taxon>
        <taxon>Neoteleostei</taxon>
        <taxon>Acanthomorphata</taxon>
        <taxon>Eupercaria</taxon>
        <taxon>Perciformes</taxon>
        <taxon>Notothenioidei</taxon>
        <taxon>Nototheniidae</taxon>
        <taxon>Trematomus</taxon>
    </lineage>
</organism>
<protein>
    <recommendedName>
        <fullName>Hemoglobin subunit beta</fullName>
    </recommendedName>
    <alternativeName>
        <fullName>Beta-globin</fullName>
    </alternativeName>
    <alternativeName>
        <fullName>Hemoglobin beta chain</fullName>
    </alternativeName>
</protein>
<dbReference type="EMBL" id="AF067569">
    <property type="protein sequence ID" value="AAC41387.1"/>
    <property type="molecule type" value="mRNA"/>
</dbReference>
<dbReference type="SMR" id="O93349"/>
<dbReference type="GO" id="GO:0072562">
    <property type="term" value="C:blood microparticle"/>
    <property type="evidence" value="ECO:0007669"/>
    <property type="project" value="TreeGrafter"/>
</dbReference>
<dbReference type="GO" id="GO:0031838">
    <property type="term" value="C:haptoglobin-hemoglobin complex"/>
    <property type="evidence" value="ECO:0007669"/>
    <property type="project" value="TreeGrafter"/>
</dbReference>
<dbReference type="GO" id="GO:0005833">
    <property type="term" value="C:hemoglobin complex"/>
    <property type="evidence" value="ECO:0007669"/>
    <property type="project" value="InterPro"/>
</dbReference>
<dbReference type="GO" id="GO:0031720">
    <property type="term" value="F:haptoglobin binding"/>
    <property type="evidence" value="ECO:0007669"/>
    <property type="project" value="TreeGrafter"/>
</dbReference>
<dbReference type="GO" id="GO:0020037">
    <property type="term" value="F:heme binding"/>
    <property type="evidence" value="ECO:0007669"/>
    <property type="project" value="InterPro"/>
</dbReference>
<dbReference type="GO" id="GO:0046872">
    <property type="term" value="F:metal ion binding"/>
    <property type="evidence" value="ECO:0007669"/>
    <property type="project" value="UniProtKB-KW"/>
</dbReference>
<dbReference type="GO" id="GO:0043177">
    <property type="term" value="F:organic acid binding"/>
    <property type="evidence" value="ECO:0007669"/>
    <property type="project" value="TreeGrafter"/>
</dbReference>
<dbReference type="GO" id="GO:0019825">
    <property type="term" value="F:oxygen binding"/>
    <property type="evidence" value="ECO:0007669"/>
    <property type="project" value="InterPro"/>
</dbReference>
<dbReference type="GO" id="GO:0005344">
    <property type="term" value="F:oxygen carrier activity"/>
    <property type="evidence" value="ECO:0007669"/>
    <property type="project" value="UniProtKB-KW"/>
</dbReference>
<dbReference type="GO" id="GO:0004601">
    <property type="term" value="F:peroxidase activity"/>
    <property type="evidence" value="ECO:0007669"/>
    <property type="project" value="TreeGrafter"/>
</dbReference>
<dbReference type="GO" id="GO:0042744">
    <property type="term" value="P:hydrogen peroxide catabolic process"/>
    <property type="evidence" value="ECO:0007669"/>
    <property type="project" value="TreeGrafter"/>
</dbReference>
<dbReference type="CDD" id="cd08925">
    <property type="entry name" value="Hb-beta-like"/>
    <property type="match status" value="1"/>
</dbReference>
<dbReference type="FunFam" id="1.10.490.10:FF:000001">
    <property type="entry name" value="Hemoglobin subunit beta"/>
    <property type="match status" value="1"/>
</dbReference>
<dbReference type="Gene3D" id="1.10.490.10">
    <property type="entry name" value="Globins"/>
    <property type="match status" value="1"/>
</dbReference>
<dbReference type="InterPro" id="IPR000971">
    <property type="entry name" value="Globin"/>
</dbReference>
<dbReference type="InterPro" id="IPR009050">
    <property type="entry name" value="Globin-like_sf"/>
</dbReference>
<dbReference type="InterPro" id="IPR012292">
    <property type="entry name" value="Globin/Proto"/>
</dbReference>
<dbReference type="InterPro" id="IPR002337">
    <property type="entry name" value="Hemoglobin_b"/>
</dbReference>
<dbReference type="InterPro" id="IPR050056">
    <property type="entry name" value="Hemoglobin_oxygen_transport"/>
</dbReference>
<dbReference type="PANTHER" id="PTHR11442">
    <property type="entry name" value="HEMOGLOBIN FAMILY MEMBER"/>
    <property type="match status" value="1"/>
</dbReference>
<dbReference type="PANTHER" id="PTHR11442:SF7">
    <property type="entry name" value="HEMOGLOBIN SUBUNIT EPSILON"/>
    <property type="match status" value="1"/>
</dbReference>
<dbReference type="Pfam" id="PF00042">
    <property type="entry name" value="Globin"/>
    <property type="match status" value="1"/>
</dbReference>
<dbReference type="PRINTS" id="PR00814">
    <property type="entry name" value="BETAHAEM"/>
</dbReference>
<dbReference type="SUPFAM" id="SSF46458">
    <property type="entry name" value="Globin-like"/>
    <property type="match status" value="1"/>
</dbReference>
<dbReference type="PROSITE" id="PS01033">
    <property type="entry name" value="GLOBIN"/>
    <property type="match status" value="1"/>
</dbReference>
<evidence type="ECO:0000255" key="1">
    <source>
        <dbReference type="PROSITE-ProRule" id="PRU00238"/>
    </source>
</evidence>